<reference key="1">
    <citation type="submission" date="2006-08" db="EMBL/GenBank/DDBJ databases">
        <title>Complete sequence of chromosome 1 of Burkholderia cenocepacia HI2424.</title>
        <authorList>
            <person name="Copeland A."/>
            <person name="Lucas S."/>
            <person name="Lapidus A."/>
            <person name="Barry K."/>
            <person name="Detter J.C."/>
            <person name="Glavina del Rio T."/>
            <person name="Hammon N."/>
            <person name="Israni S."/>
            <person name="Pitluck S."/>
            <person name="Chain P."/>
            <person name="Malfatti S."/>
            <person name="Shin M."/>
            <person name="Vergez L."/>
            <person name="Schmutz J."/>
            <person name="Larimer F."/>
            <person name="Land M."/>
            <person name="Hauser L."/>
            <person name="Kyrpides N."/>
            <person name="Kim E."/>
            <person name="LiPuma J.J."/>
            <person name="Gonzalez C.F."/>
            <person name="Konstantinidis K."/>
            <person name="Tiedje J.M."/>
            <person name="Richardson P."/>
        </authorList>
    </citation>
    <scope>NUCLEOTIDE SEQUENCE [LARGE SCALE GENOMIC DNA]</scope>
    <source>
        <strain>HI2424</strain>
    </source>
</reference>
<sequence length="305" mass="33479">MLKQRTIKSIVKTVGIGVHSGRKIELTLRPAAPGTGIVFSRVDLPTPVDIPASAMSIGDTRLASVLQKDGVRVSTVEHLMSACAGLGIDNLYVDVTAEEIPIMDGSAATFVFLIQSAGIEEQNAPKRFIKVTKPVEIRDGDKFARLDPYFGFKLKFSIDFRHPAVDKTGQELEVDFATTSYVREIARARTFGFAHEAEMLREIGLARGGSMDNAIVLDEYRILNNDGLRYDDEFVKHKMLDAIGDLYVIGHPLLASYTAYKSGHGLNNALLRELLAHEDAYEIVTFDDPQAAPKGFAFDAQTAFA</sequence>
<name>LPXC_BURCH</name>
<organism>
    <name type="scientific">Burkholderia cenocepacia (strain HI2424)</name>
    <dbReference type="NCBI Taxonomy" id="331272"/>
    <lineage>
        <taxon>Bacteria</taxon>
        <taxon>Pseudomonadati</taxon>
        <taxon>Pseudomonadota</taxon>
        <taxon>Betaproteobacteria</taxon>
        <taxon>Burkholderiales</taxon>
        <taxon>Burkholderiaceae</taxon>
        <taxon>Burkholderia</taxon>
        <taxon>Burkholderia cepacia complex</taxon>
    </lineage>
</organism>
<gene>
    <name evidence="1" type="primary">lpxC</name>
    <name type="ordered locus">Bcen2424_0566</name>
</gene>
<keyword id="KW-0378">Hydrolase</keyword>
<keyword id="KW-0441">Lipid A biosynthesis</keyword>
<keyword id="KW-0444">Lipid biosynthesis</keyword>
<keyword id="KW-0443">Lipid metabolism</keyword>
<keyword id="KW-0479">Metal-binding</keyword>
<keyword id="KW-0862">Zinc</keyword>
<evidence type="ECO:0000255" key="1">
    <source>
        <dbReference type="HAMAP-Rule" id="MF_00388"/>
    </source>
</evidence>
<accession>A0K493</accession>
<proteinExistence type="inferred from homology"/>
<feature type="chain" id="PRO_1000013190" description="UDP-3-O-acyl-N-acetylglucosamine deacetylase">
    <location>
        <begin position="1"/>
        <end position="305"/>
    </location>
</feature>
<feature type="active site" description="Proton donor" evidence="1">
    <location>
        <position position="264"/>
    </location>
</feature>
<feature type="binding site" evidence="1">
    <location>
        <position position="78"/>
    </location>
    <ligand>
        <name>Zn(2+)</name>
        <dbReference type="ChEBI" id="CHEBI:29105"/>
    </ligand>
</feature>
<feature type="binding site" evidence="1">
    <location>
        <position position="237"/>
    </location>
    <ligand>
        <name>Zn(2+)</name>
        <dbReference type="ChEBI" id="CHEBI:29105"/>
    </ligand>
</feature>
<feature type="binding site" evidence="1">
    <location>
        <position position="241"/>
    </location>
    <ligand>
        <name>Zn(2+)</name>
        <dbReference type="ChEBI" id="CHEBI:29105"/>
    </ligand>
</feature>
<comment type="function">
    <text evidence="1">Catalyzes the hydrolysis of UDP-3-O-myristoyl-N-acetylglucosamine to form UDP-3-O-myristoylglucosamine and acetate, the committed step in lipid A biosynthesis.</text>
</comment>
<comment type="catalytic activity">
    <reaction evidence="1">
        <text>a UDP-3-O-[(3R)-3-hydroxyacyl]-N-acetyl-alpha-D-glucosamine + H2O = a UDP-3-O-[(3R)-3-hydroxyacyl]-alpha-D-glucosamine + acetate</text>
        <dbReference type="Rhea" id="RHEA:67816"/>
        <dbReference type="ChEBI" id="CHEBI:15377"/>
        <dbReference type="ChEBI" id="CHEBI:30089"/>
        <dbReference type="ChEBI" id="CHEBI:137740"/>
        <dbReference type="ChEBI" id="CHEBI:173225"/>
        <dbReference type="EC" id="3.5.1.108"/>
    </reaction>
</comment>
<comment type="cofactor">
    <cofactor evidence="1">
        <name>Zn(2+)</name>
        <dbReference type="ChEBI" id="CHEBI:29105"/>
    </cofactor>
</comment>
<comment type="pathway">
    <text evidence="1">Glycolipid biosynthesis; lipid IV(A) biosynthesis; lipid IV(A) from (3R)-3-hydroxytetradecanoyl-[acyl-carrier-protein] and UDP-N-acetyl-alpha-D-glucosamine: step 2/6.</text>
</comment>
<comment type="similarity">
    <text evidence="1">Belongs to the LpxC family.</text>
</comment>
<dbReference type="EC" id="3.5.1.108" evidence="1"/>
<dbReference type="EMBL" id="CP000458">
    <property type="protein sequence ID" value="ABK07320.1"/>
    <property type="molecule type" value="Genomic_DNA"/>
</dbReference>
<dbReference type="RefSeq" id="WP_011544505.1">
    <property type="nucleotide sequence ID" value="NC_008542.1"/>
</dbReference>
<dbReference type="SMR" id="A0K493"/>
<dbReference type="GeneID" id="83047338"/>
<dbReference type="KEGG" id="bch:Bcen2424_0566"/>
<dbReference type="HOGENOM" id="CLU_046528_1_0_4"/>
<dbReference type="UniPathway" id="UPA00359">
    <property type="reaction ID" value="UER00478"/>
</dbReference>
<dbReference type="GO" id="GO:0016020">
    <property type="term" value="C:membrane"/>
    <property type="evidence" value="ECO:0007669"/>
    <property type="project" value="GOC"/>
</dbReference>
<dbReference type="GO" id="GO:0046872">
    <property type="term" value="F:metal ion binding"/>
    <property type="evidence" value="ECO:0007669"/>
    <property type="project" value="UniProtKB-KW"/>
</dbReference>
<dbReference type="GO" id="GO:0103117">
    <property type="term" value="F:UDP-3-O-acyl-N-acetylglucosamine deacetylase activity"/>
    <property type="evidence" value="ECO:0007669"/>
    <property type="project" value="UniProtKB-UniRule"/>
</dbReference>
<dbReference type="GO" id="GO:0009245">
    <property type="term" value="P:lipid A biosynthetic process"/>
    <property type="evidence" value="ECO:0007669"/>
    <property type="project" value="UniProtKB-UniRule"/>
</dbReference>
<dbReference type="Gene3D" id="3.30.230.20">
    <property type="entry name" value="lpxc deacetylase, domain 1"/>
    <property type="match status" value="1"/>
</dbReference>
<dbReference type="Gene3D" id="3.30.1700.10">
    <property type="entry name" value="lpxc deacetylase, domain 2"/>
    <property type="match status" value="1"/>
</dbReference>
<dbReference type="HAMAP" id="MF_00388">
    <property type="entry name" value="LpxC"/>
    <property type="match status" value="1"/>
</dbReference>
<dbReference type="InterPro" id="IPR020568">
    <property type="entry name" value="Ribosomal_Su5_D2-typ_SF"/>
</dbReference>
<dbReference type="InterPro" id="IPR004463">
    <property type="entry name" value="UDP-acyl_GlcNac_deAcase"/>
</dbReference>
<dbReference type="InterPro" id="IPR011334">
    <property type="entry name" value="UDP-acyl_GlcNac_deAcase_C"/>
</dbReference>
<dbReference type="InterPro" id="IPR015870">
    <property type="entry name" value="UDP-acyl_N-AcGlcN_deAcase_N"/>
</dbReference>
<dbReference type="NCBIfam" id="TIGR00325">
    <property type="entry name" value="lpxC"/>
    <property type="match status" value="1"/>
</dbReference>
<dbReference type="PANTHER" id="PTHR33694">
    <property type="entry name" value="UDP-3-O-ACYL-N-ACETYLGLUCOSAMINE DEACETYLASE 1, MITOCHONDRIAL-RELATED"/>
    <property type="match status" value="1"/>
</dbReference>
<dbReference type="PANTHER" id="PTHR33694:SF1">
    <property type="entry name" value="UDP-3-O-ACYL-N-ACETYLGLUCOSAMINE DEACETYLASE 1, MITOCHONDRIAL-RELATED"/>
    <property type="match status" value="1"/>
</dbReference>
<dbReference type="Pfam" id="PF03331">
    <property type="entry name" value="LpxC"/>
    <property type="match status" value="1"/>
</dbReference>
<dbReference type="SUPFAM" id="SSF54211">
    <property type="entry name" value="Ribosomal protein S5 domain 2-like"/>
    <property type="match status" value="2"/>
</dbReference>
<protein>
    <recommendedName>
        <fullName evidence="1">UDP-3-O-acyl-N-acetylglucosamine deacetylase</fullName>
        <shortName evidence="1">UDP-3-O-acyl-GlcNAc deacetylase</shortName>
        <ecNumber evidence="1">3.5.1.108</ecNumber>
    </recommendedName>
    <alternativeName>
        <fullName evidence="1">UDP-3-O-[R-3-hydroxymyristoyl]-N-acetylglucosamine deacetylase</fullName>
    </alternativeName>
</protein>